<name>RS20_MYCCT</name>
<proteinExistence type="inferred from homology"/>
<feature type="chain" id="PRO_0000236440" description="Small ribosomal subunit protein bS20">
    <location>
        <begin position="1"/>
        <end position="81"/>
    </location>
</feature>
<sequence>MANIKSQKKRVLTNEKSRLANKAFKSEIKTAIKKALNAKSNDEANKTELVNHAVSLVDKGLKKGIFKDNKAAREKSRLMSA</sequence>
<dbReference type="EMBL" id="CP000123">
    <property type="protein sequence ID" value="ABC01311.1"/>
    <property type="molecule type" value="Genomic_DNA"/>
</dbReference>
<dbReference type="RefSeq" id="WP_011387649.1">
    <property type="nucleotide sequence ID" value="NC_007633.1"/>
</dbReference>
<dbReference type="SMR" id="Q2SR48"/>
<dbReference type="GeneID" id="23778230"/>
<dbReference type="KEGG" id="mcp:MCAP_0818"/>
<dbReference type="HOGENOM" id="CLU_160655_1_2_14"/>
<dbReference type="PhylomeDB" id="Q2SR48"/>
<dbReference type="Proteomes" id="UP000001928">
    <property type="component" value="Chromosome"/>
</dbReference>
<dbReference type="GO" id="GO:0005829">
    <property type="term" value="C:cytosol"/>
    <property type="evidence" value="ECO:0007669"/>
    <property type="project" value="TreeGrafter"/>
</dbReference>
<dbReference type="GO" id="GO:0015935">
    <property type="term" value="C:small ribosomal subunit"/>
    <property type="evidence" value="ECO:0007669"/>
    <property type="project" value="TreeGrafter"/>
</dbReference>
<dbReference type="GO" id="GO:0070181">
    <property type="term" value="F:small ribosomal subunit rRNA binding"/>
    <property type="evidence" value="ECO:0007669"/>
    <property type="project" value="TreeGrafter"/>
</dbReference>
<dbReference type="GO" id="GO:0003735">
    <property type="term" value="F:structural constituent of ribosome"/>
    <property type="evidence" value="ECO:0007669"/>
    <property type="project" value="InterPro"/>
</dbReference>
<dbReference type="GO" id="GO:0006412">
    <property type="term" value="P:translation"/>
    <property type="evidence" value="ECO:0007669"/>
    <property type="project" value="UniProtKB-UniRule"/>
</dbReference>
<dbReference type="Gene3D" id="1.20.58.110">
    <property type="entry name" value="Ribosomal protein S20"/>
    <property type="match status" value="1"/>
</dbReference>
<dbReference type="HAMAP" id="MF_00500">
    <property type="entry name" value="Ribosomal_bS20"/>
    <property type="match status" value="1"/>
</dbReference>
<dbReference type="InterPro" id="IPR002583">
    <property type="entry name" value="Ribosomal_bS20"/>
</dbReference>
<dbReference type="InterPro" id="IPR036510">
    <property type="entry name" value="Ribosomal_bS20_sf"/>
</dbReference>
<dbReference type="NCBIfam" id="TIGR00029">
    <property type="entry name" value="S20"/>
    <property type="match status" value="1"/>
</dbReference>
<dbReference type="PANTHER" id="PTHR33398">
    <property type="entry name" value="30S RIBOSOMAL PROTEIN S20"/>
    <property type="match status" value="1"/>
</dbReference>
<dbReference type="PANTHER" id="PTHR33398:SF1">
    <property type="entry name" value="SMALL RIBOSOMAL SUBUNIT PROTEIN BS20C"/>
    <property type="match status" value="1"/>
</dbReference>
<dbReference type="Pfam" id="PF01649">
    <property type="entry name" value="Ribosomal_S20p"/>
    <property type="match status" value="1"/>
</dbReference>
<dbReference type="SUPFAM" id="SSF46992">
    <property type="entry name" value="Ribosomal protein S20"/>
    <property type="match status" value="1"/>
</dbReference>
<reference key="1">
    <citation type="submission" date="2005-09" db="EMBL/GenBank/DDBJ databases">
        <authorList>
            <person name="Glass J.I."/>
            <person name="Lartigue C."/>
            <person name="Pfannkoch C."/>
            <person name="Baden-Tillson H."/>
            <person name="Smith H.O."/>
            <person name="Venter J.C."/>
            <person name="Roske K."/>
            <person name="Wise K.S."/>
            <person name="Calcutt M.J."/>
            <person name="Nelson W.C."/>
            <person name="Nierman W.C."/>
        </authorList>
    </citation>
    <scope>NUCLEOTIDE SEQUENCE [LARGE SCALE GENOMIC DNA]</scope>
    <source>
        <strain>California kid / ATCC 27343 / NCTC 10154</strain>
    </source>
</reference>
<evidence type="ECO:0000255" key="1">
    <source>
        <dbReference type="HAMAP-Rule" id="MF_00500"/>
    </source>
</evidence>
<evidence type="ECO:0000305" key="2"/>
<gene>
    <name evidence="1" type="primary">rpsT</name>
    <name type="ordered locus">MCAP_0818</name>
</gene>
<accession>Q2SR48</accession>
<comment type="function">
    <text evidence="1">Binds directly to 16S ribosomal RNA.</text>
</comment>
<comment type="similarity">
    <text evidence="1">Belongs to the bacterial ribosomal protein bS20 family.</text>
</comment>
<organism>
    <name type="scientific">Mycoplasma capricolum subsp. capricolum (strain California kid / ATCC 27343 / NCTC 10154)</name>
    <dbReference type="NCBI Taxonomy" id="340047"/>
    <lineage>
        <taxon>Bacteria</taxon>
        <taxon>Bacillati</taxon>
        <taxon>Mycoplasmatota</taxon>
        <taxon>Mollicutes</taxon>
        <taxon>Mycoplasmataceae</taxon>
        <taxon>Mycoplasma</taxon>
    </lineage>
</organism>
<keyword id="KW-0687">Ribonucleoprotein</keyword>
<keyword id="KW-0689">Ribosomal protein</keyword>
<keyword id="KW-0694">RNA-binding</keyword>
<keyword id="KW-0699">rRNA-binding</keyword>
<protein>
    <recommendedName>
        <fullName evidence="1">Small ribosomal subunit protein bS20</fullName>
    </recommendedName>
    <alternativeName>
        <fullName evidence="2">30S ribosomal protein S20</fullName>
    </alternativeName>
</protein>